<comment type="function">
    <text evidence="2">Isoform 1, but not isoform 2 or isoform 3, may induce G2 arrest and apoptosis. May also increase cell sensitivity to apoptotic stimuli.</text>
</comment>
<comment type="interaction">
    <interactant intactId="EBI-726146">
        <id>Q9Y421</id>
    </interactant>
    <interactant intactId="EBI-373289">
        <id>Q9HCG8</id>
        <label>CWC22</label>
    </interactant>
    <organismsDiffer>false</organismsDiffer>
    <experiments>2</experiments>
</comment>
<comment type="subcellular location">
    <molecule>Isoform 1</molecule>
    <subcellularLocation>
        <location>Nucleus</location>
    </subcellularLocation>
</comment>
<comment type="subcellular location">
    <molecule>Isoform 2</molecule>
    <subcellularLocation>
        <location>Nucleus</location>
    </subcellularLocation>
</comment>
<comment type="alternative products">
    <event type="alternative splicing"/>
    <isoform>
        <id>Q9Y421-1</id>
        <name>1</name>
        <name>OTAG-12b</name>
        <sequence type="displayed"/>
    </isoform>
    <isoform>
        <id>Q9Y421-2</id>
        <name>2</name>
        <name>OTAG-12a</name>
        <sequence type="described" ref="VSP_043861"/>
    </isoform>
    <isoform>
        <id>Q9Y421-3</id>
        <name>3</name>
        <name>OTAG-12c</name>
        <sequence type="described" ref="VSP_043860"/>
    </isoform>
</comment>
<comment type="tissue specificity">
    <text evidence="2">Expressed in ovary, with isoform 1 being predominant.</text>
</comment>
<comment type="induction">
    <text evidence="2">By etoposide, puromycin or carboplatin.</text>
</comment>
<comment type="similarity">
    <text evidence="4">Belongs to the FAM32 family.</text>
</comment>
<reference key="1">
    <citation type="journal article" date="2000" name="Genome Res.">
        <title>Identification of novel human genes evolutionarily conserved in Caenorhabditis elegans by comparative proteomics.</title>
        <authorList>
            <person name="Lai C.-H."/>
            <person name="Chou C.-Y."/>
            <person name="Ch'ang L.-Y."/>
            <person name="Liu C.-S."/>
            <person name="Lin W.-C."/>
        </authorList>
    </citation>
    <scope>NUCLEOTIDE SEQUENCE [LARGE SCALE MRNA] (ISOFORM 1)</scope>
</reference>
<reference key="2">
    <citation type="journal article" date="2001" name="Genome Res.">
        <title>Towards a catalog of human genes and proteins: sequencing and analysis of 500 novel complete protein coding human cDNAs.</title>
        <authorList>
            <person name="Wiemann S."/>
            <person name="Weil B."/>
            <person name="Wellenreuther R."/>
            <person name="Gassenhuber J."/>
            <person name="Glassl S."/>
            <person name="Ansorge W."/>
            <person name="Boecher M."/>
            <person name="Bloecker H."/>
            <person name="Bauersachs S."/>
            <person name="Blum H."/>
            <person name="Lauber J."/>
            <person name="Duesterhoeft A."/>
            <person name="Beyer A."/>
            <person name="Koehrer K."/>
            <person name="Strack N."/>
            <person name="Mewes H.-W."/>
            <person name="Ottenwaelder B."/>
            <person name="Obermaier B."/>
            <person name="Tampe J."/>
            <person name="Heubner D."/>
            <person name="Wambutt R."/>
            <person name="Korn B."/>
            <person name="Klein M."/>
            <person name="Poustka A."/>
        </authorList>
    </citation>
    <scope>NUCLEOTIDE SEQUENCE [LARGE SCALE MRNA] (ISOFORM 1)</scope>
    <source>
        <tissue>Uterus</tissue>
    </source>
</reference>
<reference key="3">
    <citation type="journal article" date="2004" name="Genome Res.">
        <title>The status, quality, and expansion of the NIH full-length cDNA project: the Mammalian Gene Collection (MGC).</title>
        <authorList>
            <consortium name="The MGC Project Team"/>
        </authorList>
    </citation>
    <scope>NUCLEOTIDE SEQUENCE [LARGE SCALE MRNA] (ISOFORMS 1 AND 2)</scope>
    <source>
        <tissue>Brain</tissue>
        <tissue>Lung</tissue>
        <tissue>Lymph</tissue>
    </source>
</reference>
<reference key="4">
    <citation type="journal article" date="2011" name="BMC Syst. Biol.">
        <title>Initial characterization of the human central proteome.</title>
        <authorList>
            <person name="Burkard T.R."/>
            <person name="Planyavsky M."/>
            <person name="Kaupe I."/>
            <person name="Breitwieser F.P."/>
            <person name="Buerckstuemmer T."/>
            <person name="Bennett K.L."/>
            <person name="Superti-Furga G."/>
            <person name="Colinge J."/>
        </authorList>
    </citation>
    <scope>IDENTIFICATION BY MASS SPECTROMETRY [LARGE SCALE ANALYSIS]</scope>
</reference>
<reference key="5">
    <citation type="journal article" date="2011" name="Oncogene">
        <title>Anti-proliferative and pro-apoptotic actions of a novel human and mouse ovarian tumor-associated gene OTAG-12: downregulation, alternative splicing and drug sensitization.</title>
        <authorList>
            <person name="Chen X."/>
            <person name="Zhang H."/>
            <person name="Aravindakshan J.P."/>
            <person name="Gotlieb W.H."/>
            <person name="Sairam M.R."/>
        </authorList>
    </citation>
    <scope>FUNCTION</scope>
    <scope>SUBCELLULAR LOCATION</scope>
    <scope>TISSUE SPECIFICITY</scope>
    <scope>ALTERNATIVE SPLICING</scope>
    <scope>INDUCTION</scope>
</reference>
<proteinExistence type="evidence at protein level"/>
<name>FA32A_HUMAN</name>
<accession>Q9Y421</accession>
<accession>Q9BT02</accession>
<protein>
    <recommendedName>
        <fullName>Protein FAM32A</fullName>
    </recommendedName>
    <alternativeName>
        <fullName>Ovarian tumor-associated gene 12</fullName>
        <shortName>OTAG-12</shortName>
    </alternativeName>
</protein>
<keyword id="KW-0002">3D-structure</keyword>
<keyword id="KW-0025">Alternative splicing</keyword>
<keyword id="KW-0053">Apoptosis</keyword>
<keyword id="KW-0131">Cell cycle</keyword>
<keyword id="KW-0539">Nucleus</keyword>
<keyword id="KW-1267">Proteomics identification</keyword>
<keyword id="KW-1185">Reference proteome</keyword>
<feature type="chain" id="PRO_0000223250" description="Protein FAM32A">
    <location>
        <begin position="1"/>
        <end position="112"/>
    </location>
</feature>
<feature type="region of interest" description="Disordered" evidence="1">
    <location>
        <begin position="23"/>
        <end position="58"/>
    </location>
</feature>
<feature type="compositionally biased region" description="Basic and acidic residues" evidence="1">
    <location>
        <begin position="45"/>
        <end position="58"/>
    </location>
</feature>
<feature type="splice variant" id="VSP_043860" description="In isoform 3." evidence="4">
    <original>MEAYEQVQKGPLKLKGVAELGVTK</original>
    <variation>MSFS</variation>
    <location>
        <begin position="1"/>
        <end position="24"/>
    </location>
</feature>
<feature type="splice variant" id="VSP_043861" description="In isoform 2." evidence="3">
    <original>MERILKKASKTHKQRVEDFNRHLDTLTEHYDIPKVSWTK</original>
    <variation>GHQTSCIATGFQGHKANAARSYAWIQNWYCVPSS</variation>
    <location>
        <begin position="74"/>
        <end position="112"/>
    </location>
</feature>
<gene>
    <name type="primary">FAM32A</name>
    <name type="synonym">OTAG12</name>
    <name type="ORF">CGI-144</name>
</gene>
<dbReference type="EMBL" id="AF151902">
    <property type="protein sequence ID" value="AAD34139.1"/>
    <property type="molecule type" value="mRNA"/>
</dbReference>
<dbReference type="EMBL" id="AL050157">
    <property type="protein sequence ID" value="CAB43298.2"/>
    <property type="molecule type" value="mRNA"/>
</dbReference>
<dbReference type="EMBL" id="BC000639">
    <property type="protein sequence ID" value="AAH00639.1"/>
    <property type="molecule type" value="mRNA"/>
</dbReference>
<dbReference type="EMBL" id="BC004447">
    <property type="protein sequence ID" value="AAH04447.1"/>
    <property type="molecule type" value="mRNA"/>
</dbReference>
<dbReference type="EMBL" id="BC017286">
    <property type="protein sequence ID" value="AAH17286.1"/>
    <property type="molecule type" value="mRNA"/>
</dbReference>
<dbReference type="EMBL" id="BU543240">
    <property type="status" value="NOT_ANNOTATED_CDS"/>
    <property type="molecule type" value="mRNA"/>
</dbReference>
<dbReference type="CCDS" id="CCDS12341.1">
    <molecule id="Q9Y421-1"/>
</dbReference>
<dbReference type="PIR" id="T08783">
    <property type="entry name" value="T08783"/>
</dbReference>
<dbReference type="RefSeq" id="NP_054796.1">
    <molecule id="Q9Y421-1"/>
    <property type="nucleotide sequence ID" value="NM_014077.4"/>
</dbReference>
<dbReference type="PDB" id="6QDV">
    <property type="method" value="EM"/>
    <property type="resolution" value="3.30 A"/>
    <property type="chains" value="G=53-112"/>
</dbReference>
<dbReference type="PDB" id="7W5A">
    <property type="method" value="EM"/>
    <property type="resolution" value="3.60 A"/>
    <property type="chains" value="z=1-112"/>
</dbReference>
<dbReference type="PDB" id="7W5B">
    <property type="method" value="EM"/>
    <property type="resolution" value="4.30 A"/>
    <property type="chains" value="z=1-112"/>
</dbReference>
<dbReference type="PDB" id="8C6J">
    <property type="method" value="EM"/>
    <property type="resolution" value="2.80 A"/>
    <property type="chains" value="G=1-112"/>
</dbReference>
<dbReference type="PDB" id="9FMD">
    <property type="method" value="EM"/>
    <property type="resolution" value="3.30 A"/>
    <property type="chains" value="32=1-112"/>
</dbReference>
<dbReference type="PDBsum" id="6QDV"/>
<dbReference type="PDBsum" id="7W5A"/>
<dbReference type="PDBsum" id="7W5B"/>
<dbReference type="PDBsum" id="8C6J"/>
<dbReference type="PDBsum" id="9FMD"/>
<dbReference type="EMDB" id="EMD-16452"/>
<dbReference type="EMDB" id="EMD-32319"/>
<dbReference type="EMDB" id="EMD-32321"/>
<dbReference type="EMDB" id="EMD-4525"/>
<dbReference type="SMR" id="Q9Y421"/>
<dbReference type="BioGRID" id="117488">
    <property type="interactions" value="32"/>
</dbReference>
<dbReference type="FunCoup" id="Q9Y421">
    <property type="interactions" value="1640"/>
</dbReference>
<dbReference type="IntAct" id="Q9Y421">
    <property type="interactions" value="12"/>
</dbReference>
<dbReference type="MINT" id="Q9Y421"/>
<dbReference type="STRING" id="9606.ENSP00000263384"/>
<dbReference type="iPTMnet" id="Q9Y421"/>
<dbReference type="PhosphoSitePlus" id="Q9Y421"/>
<dbReference type="BioMuta" id="FAM32A"/>
<dbReference type="DMDM" id="74753494"/>
<dbReference type="jPOST" id="Q9Y421"/>
<dbReference type="MassIVE" id="Q9Y421"/>
<dbReference type="PaxDb" id="9606-ENSP00000263384"/>
<dbReference type="PeptideAtlas" id="Q9Y421"/>
<dbReference type="ProteomicsDB" id="86090">
    <molecule id="Q9Y421-1"/>
</dbReference>
<dbReference type="ProteomicsDB" id="86091">
    <molecule id="Q9Y421-2"/>
</dbReference>
<dbReference type="ProteomicsDB" id="86092">
    <molecule id="Q9Y421-3"/>
</dbReference>
<dbReference type="Pumba" id="Q9Y421"/>
<dbReference type="TopDownProteomics" id="Q9Y421-1">
    <molecule id="Q9Y421-1"/>
</dbReference>
<dbReference type="Antibodypedia" id="54347">
    <property type="antibodies" value="45 antibodies from 15 providers"/>
</dbReference>
<dbReference type="DNASU" id="26017"/>
<dbReference type="Ensembl" id="ENST00000263384.12">
    <molecule id="Q9Y421-1"/>
    <property type="protein sequence ID" value="ENSP00000263384.6"/>
    <property type="gene ID" value="ENSG00000105058.12"/>
</dbReference>
<dbReference type="Ensembl" id="ENST00000589852.5">
    <molecule id="Q9Y421-3"/>
    <property type="protein sequence ID" value="ENSP00000465969.1"/>
    <property type="gene ID" value="ENSG00000105058.12"/>
</dbReference>
<dbReference type="GeneID" id="26017"/>
<dbReference type="KEGG" id="hsa:26017"/>
<dbReference type="MANE-Select" id="ENST00000263384.12">
    <property type="protein sequence ID" value="ENSP00000263384.6"/>
    <property type="RefSeq nucleotide sequence ID" value="NM_014077.4"/>
    <property type="RefSeq protein sequence ID" value="NP_054796.1"/>
</dbReference>
<dbReference type="UCSC" id="uc002ndt.4">
    <molecule id="Q9Y421-1"/>
    <property type="organism name" value="human"/>
</dbReference>
<dbReference type="AGR" id="HGNC:24563"/>
<dbReference type="CTD" id="26017"/>
<dbReference type="DisGeNET" id="26017"/>
<dbReference type="GeneCards" id="FAM32A"/>
<dbReference type="HGNC" id="HGNC:24563">
    <property type="gene designation" value="FAM32A"/>
</dbReference>
<dbReference type="HPA" id="ENSG00000105058">
    <property type="expression patterns" value="Low tissue specificity"/>
</dbReference>
<dbReference type="MIM" id="614554">
    <property type="type" value="gene"/>
</dbReference>
<dbReference type="neXtProt" id="NX_Q9Y421"/>
<dbReference type="OpenTargets" id="ENSG00000105058"/>
<dbReference type="PharmGKB" id="PA134956082"/>
<dbReference type="VEuPathDB" id="HostDB:ENSG00000105058"/>
<dbReference type="eggNOG" id="KOG3410">
    <property type="taxonomic scope" value="Eukaryota"/>
</dbReference>
<dbReference type="GeneTree" id="ENSGT00390000013811"/>
<dbReference type="HOGENOM" id="CLU_098435_3_0_1"/>
<dbReference type="InParanoid" id="Q9Y421"/>
<dbReference type="OMA" id="QLSEHHD"/>
<dbReference type="OrthoDB" id="205403at2759"/>
<dbReference type="PAN-GO" id="Q9Y421">
    <property type="GO annotations" value="1 GO annotation based on evolutionary models"/>
</dbReference>
<dbReference type="PhylomeDB" id="Q9Y421"/>
<dbReference type="TreeFam" id="TF314020"/>
<dbReference type="PathwayCommons" id="Q9Y421"/>
<dbReference type="Reactome" id="R-HSA-72163">
    <property type="pathway name" value="mRNA Splicing - Major Pathway"/>
</dbReference>
<dbReference type="SignaLink" id="Q9Y421"/>
<dbReference type="BioGRID-ORCS" id="26017">
    <property type="hits" value="599 hits in 1156 CRISPR screens"/>
</dbReference>
<dbReference type="ChiTaRS" id="FAM32A">
    <property type="organism name" value="human"/>
</dbReference>
<dbReference type="GeneWiki" id="FAM32A"/>
<dbReference type="GenomeRNAi" id="26017"/>
<dbReference type="Pharos" id="Q9Y421">
    <property type="development level" value="Tdark"/>
</dbReference>
<dbReference type="PRO" id="PR:Q9Y421"/>
<dbReference type="Proteomes" id="UP000005640">
    <property type="component" value="Chromosome 19"/>
</dbReference>
<dbReference type="RNAct" id="Q9Y421">
    <property type="molecule type" value="protein"/>
</dbReference>
<dbReference type="Bgee" id="ENSG00000105058">
    <property type="expression patterns" value="Expressed in cortical plate and 208 other cell types or tissues"/>
</dbReference>
<dbReference type="ExpressionAtlas" id="Q9Y421">
    <property type="expression patterns" value="baseline and differential"/>
</dbReference>
<dbReference type="GO" id="GO:0005730">
    <property type="term" value="C:nucleolus"/>
    <property type="evidence" value="ECO:0000314"/>
    <property type="project" value="LIFEdb"/>
</dbReference>
<dbReference type="GO" id="GO:0005654">
    <property type="term" value="C:nucleoplasm"/>
    <property type="evidence" value="ECO:0000314"/>
    <property type="project" value="HPA"/>
</dbReference>
<dbReference type="GO" id="GO:0003723">
    <property type="term" value="F:RNA binding"/>
    <property type="evidence" value="ECO:0007005"/>
    <property type="project" value="UniProtKB"/>
</dbReference>
<dbReference type="GO" id="GO:0006915">
    <property type="term" value="P:apoptotic process"/>
    <property type="evidence" value="ECO:0007669"/>
    <property type="project" value="UniProtKB-KW"/>
</dbReference>
<dbReference type="InterPro" id="IPR013865">
    <property type="entry name" value="FAM32A"/>
</dbReference>
<dbReference type="PANTHER" id="PTHR13282">
    <property type="entry name" value="PROTEIN FAM32A"/>
    <property type="match status" value="1"/>
</dbReference>
<dbReference type="PANTHER" id="PTHR13282:SF6">
    <property type="entry name" value="PROTEIN FAM32A"/>
    <property type="match status" value="1"/>
</dbReference>
<dbReference type="Pfam" id="PF08555">
    <property type="entry name" value="FAM32A"/>
    <property type="match status" value="1"/>
</dbReference>
<sequence length="112" mass="13178">MEAYEQVQKGPLKLKGVAELGVTKRKKKKKDKDKAKLLEAMGTSKKNEEEKRRGLDKRTPAQAAFEKMQEKRQMERILKKASKTHKQRVEDFNRHLDTLTEHYDIPKVSWTK</sequence>
<organism>
    <name type="scientific">Homo sapiens</name>
    <name type="common">Human</name>
    <dbReference type="NCBI Taxonomy" id="9606"/>
    <lineage>
        <taxon>Eukaryota</taxon>
        <taxon>Metazoa</taxon>
        <taxon>Chordata</taxon>
        <taxon>Craniata</taxon>
        <taxon>Vertebrata</taxon>
        <taxon>Euteleostomi</taxon>
        <taxon>Mammalia</taxon>
        <taxon>Eutheria</taxon>
        <taxon>Euarchontoglires</taxon>
        <taxon>Primates</taxon>
        <taxon>Haplorrhini</taxon>
        <taxon>Catarrhini</taxon>
        <taxon>Hominidae</taxon>
        <taxon>Homo</taxon>
    </lineage>
</organism>
<evidence type="ECO:0000256" key="1">
    <source>
        <dbReference type="SAM" id="MobiDB-lite"/>
    </source>
</evidence>
<evidence type="ECO:0000269" key="2">
    <source>
    </source>
</evidence>
<evidence type="ECO:0000303" key="3">
    <source>
    </source>
</evidence>
<evidence type="ECO:0000305" key="4"/>